<comment type="function">
    <text evidence="1">Located on the platform of the 30S subunit, it bridges several disparate RNA helices of the 16S rRNA. Forms part of the Shine-Dalgarno cleft in the 70S ribosome.</text>
</comment>
<comment type="subunit">
    <text evidence="1">Part of the 30S ribosomal subunit. Interacts with proteins S7 and S18. Binds to IF-3.</text>
</comment>
<comment type="similarity">
    <text evidence="1">Belongs to the universal ribosomal protein uS11 family.</text>
</comment>
<feature type="chain" id="PRO_1000086187" description="Small ribosomal subunit protein uS11">
    <location>
        <begin position="1"/>
        <end position="130"/>
    </location>
</feature>
<organism>
    <name type="scientific">Dehalococcoides mccartyi (strain ATCC BAA-2100 / JCM 16839 / KCTC 5957 / BAV1)</name>
    <dbReference type="NCBI Taxonomy" id="216389"/>
    <lineage>
        <taxon>Bacteria</taxon>
        <taxon>Bacillati</taxon>
        <taxon>Chloroflexota</taxon>
        <taxon>Dehalococcoidia</taxon>
        <taxon>Dehalococcoidales</taxon>
        <taxon>Dehalococcoidaceae</taxon>
        <taxon>Dehalococcoides</taxon>
    </lineage>
</organism>
<protein>
    <recommendedName>
        <fullName evidence="1">Small ribosomal subunit protein uS11</fullName>
    </recommendedName>
    <alternativeName>
        <fullName evidence="2">30S ribosomal protein S11</fullName>
    </alternativeName>
</protein>
<accession>A5FRX0</accession>
<sequence length="130" mass="13724">MAVKKRAGAKKKEKKVIPVGKAYVQATFNNTIVTLTDLQGNVIAWASCGTAGFKGSRKGTPYAAQMAAQTAARKAAESGLRQVEVLVKGPGSGREAAIRSLQASGINVTAIRDVTPIPHNGCRPPKRRRV</sequence>
<evidence type="ECO:0000255" key="1">
    <source>
        <dbReference type="HAMAP-Rule" id="MF_01310"/>
    </source>
</evidence>
<evidence type="ECO:0000305" key="2"/>
<name>RS11_DEHMB</name>
<dbReference type="EMBL" id="CP000688">
    <property type="protein sequence ID" value="ABQ17062.1"/>
    <property type="molecule type" value="Genomic_DNA"/>
</dbReference>
<dbReference type="SMR" id="A5FRX0"/>
<dbReference type="KEGG" id="deb:DehaBAV1_0477"/>
<dbReference type="PATRIC" id="fig|216389.18.peg.520"/>
<dbReference type="HOGENOM" id="CLU_072439_5_0_0"/>
<dbReference type="GO" id="GO:1990904">
    <property type="term" value="C:ribonucleoprotein complex"/>
    <property type="evidence" value="ECO:0007669"/>
    <property type="project" value="UniProtKB-KW"/>
</dbReference>
<dbReference type="GO" id="GO:0005840">
    <property type="term" value="C:ribosome"/>
    <property type="evidence" value="ECO:0007669"/>
    <property type="project" value="UniProtKB-KW"/>
</dbReference>
<dbReference type="GO" id="GO:0019843">
    <property type="term" value="F:rRNA binding"/>
    <property type="evidence" value="ECO:0007669"/>
    <property type="project" value="UniProtKB-UniRule"/>
</dbReference>
<dbReference type="GO" id="GO:0003735">
    <property type="term" value="F:structural constituent of ribosome"/>
    <property type="evidence" value="ECO:0007669"/>
    <property type="project" value="InterPro"/>
</dbReference>
<dbReference type="GO" id="GO:0006412">
    <property type="term" value="P:translation"/>
    <property type="evidence" value="ECO:0007669"/>
    <property type="project" value="UniProtKB-UniRule"/>
</dbReference>
<dbReference type="FunFam" id="3.30.420.80:FF:000001">
    <property type="entry name" value="30S ribosomal protein S11"/>
    <property type="match status" value="1"/>
</dbReference>
<dbReference type="Gene3D" id="3.30.420.80">
    <property type="entry name" value="Ribosomal protein S11"/>
    <property type="match status" value="1"/>
</dbReference>
<dbReference type="HAMAP" id="MF_01310">
    <property type="entry name" value="Ribosomal_uS11"/>
    <property type="match status" value="1"/>
</dbReference>
<dbReference type="InterPro" id="IPR001971">
    <property type="entry name" value="Ribosomal_uS11"/>
</dbReference>
<dbReference type="InterPro" id="IPR019981">
    <property type="entry name" value="Ribosomal_uS11_bac-type"/>
</dbReference>
<dbReference type="InterPro" id="IPR018102">
    <property type="entry name" value="Ribosomal_uS11_CS"/>
</dbReference>
<dbReference type="InterPro" id="IPR036967">
    <property type="entry name" value="Ribosomal_uS11_sf"/>
</dbReference>
<dbReference type="NCBIfam" id="NF003698">
    <property type="entry name" value="PRK05309.1"/>
    <property type="match status" value="1"/>
</dbReference>
<dbReference type="NCBIfam" id="TIGR03632">
    <property type="entry name" value="uS11_bact"/>
    <property type="match status" value="1"/>
</dbReference>
<dbReference type="PANTHER" id="PTHR11759">
    <property type="entry name" value="40S RIBOSOMAL PROTEIN S14/30S RIBOSOMAL PROTEIN S11"/>
    <property type="match status" value="1"/>
</dbReference>
<dbReference type="Pfam" id="PF00411">
    <property type="entry name" value="Ribosomal_S11"/>
    <property type="match status" value="1"/>
</dbReference>
<dbReference type="PIRSF" id="PIRSF002131">
    <property type="entry name" value="Ribosomal_S11"/>
    <property type="match status" value="1"/>
</dbReference>
<dbReference type="SUPFAM" id="SSF53137">
    <property type="entry name" value="Translational machinery components"/>
    <property type="match status" value="1"/>
</dbReference>
<dbReference type="PROSITE" id="PS00054">
    <property type="entry name" value="RIBOSOMAL_S11"/>
    <property type="match status" value="1"/>
</dbReference>
<reference key="1">
    <citation type="submission" date="2007-05" db="EMBL/GenBank/DDBJ databases">
        <title>Complete sequence of Dehalococcoides sp. BAV1.</title>
        <authorList>
            <consortium name="US DOE Joint Genome Institute"/>
            <person name="Copeland A."/>
            <person name="Lucas S."/>
            <person name="Lapidus A."/>
            <person name="Barry K."/>
            <person name="Detter J.C."/>
            <person name="Glavina del Rio T."/>
            <person name="Hammon N."/>
            <person name="Israni S."/>
            <person name="Pitluck S."/>
            <person name="Lowry S."/>
            <person name="Clum A."/>
            <person name="Schmutz J."/>
            <person name="Larimer F."/>
            <person name="Land M."/>
            <person name="Hauser L."/>
            <person name="Kyrpides N."/>
            <person name="Kim E."/>
            <person name="Ritalahti K.M."/>
            <person name="Loeffler F."/>
            <person name="Richardson P."/>
        </authorList>
    </citation>
    <scope>NUCLEOTIDE SEQUENCE [LARGE SCALE GENOMIC DNA]</scope>
    <source>
        <strain>ATCC BAA-2100 / JCM 16839 / KCTC 5957 / BAV1</strain>
    </source>
</reference>
<proteinExistence type="inferred from homology"/>
<keyword id="KW-0687">Ribonucleoprotein</keyword>
<keyword id="KW-0689">Ribosomal protein</keyword>
<keyword id="KW-0694">RNA-binding</keyword>
<keyword id="KW-0699">rRNA-binding</keyword>
<gene>
    <name evidence="1" type="primary">rpsK</name>
    <name type="ordered locus">DehaBAV1_0477</name>
</gene>